<feature type="chain" id="PRO_0000092861" description="Phosphate import ATP-binding protein PstB">
    <location>
        <begin position="1"/>
        <end position="277"/>
    </location>
</feature>
<feature type="domain" description="ABC transporter" evidence="1">
    <location>
        <begin position="31"/>
        <end position="272"/>
    </location>
</feature>
<feature type="binding site" evidence="1">
    <location>
        <begin position="63"/>
        <end position="70"/>
    </location>
    <ligand>
        <name>ATP</name>
        <dbReference type="ChEBI" id="CHEBI:30616"/>
    </ligand>
</feature>
<proteinExistence type="inferred from homology"/>
<dbReference type="EC" id="7.3.2.1" evidence="1"/>
<dbReference type="EMBL" id="D45195">
    <property type="protein sequence ID" value="BAA08137.1"/>
    <property type="molecule type" value="Genomic_DNA"/>
</dbReference>
<dbReference type="EMBL" id="D28587">
    <property type="status" value="NOT_ANNOTATED_CDS"/>
    <property type="molecule type" value="Genomic_DNA"/>
</dbReference>
<dbReference type="EMBL" id="AE004091">
    <property type="protein sequence ID" value="AAG08751.1"/>
    <property type="molecule type" value="Genomic_DNA"/>
</dbReference>
<dbReference type="PIR" id="S68595">
    <property type="entry name" value="S68595"/>
</dbReference>
<dbReference type="RefSeq" id="NP_254053.1">
    <property type="nucleotide sequence ID" value="NC_002516.2"/>
</dbReference>
<dbReference type="RefSeq" id="WP_003096663.1">
    <property type="nucleotide sequence ID" value="NZ_QZGE01000020.1"/>
</dbReference>
<dbReference type="SMR" id="Q51546"/>
<dbReference type="FunCoup" id="Q51546">
    <property type="interactions" value="531"/>
</dbReference>
<dbReference type="STRING" id="208964.PA5366"/>
<dbReference type="PaxDb" id="208964-PA5366"/>
<dbReference type="GeneID" id="881628"/>
<dbReference type="KEGG" id="pae:PA5366"/>
<dbReference type="PATRIC" id="fig|208964.12.peg.5623"/>
<dbReference type="PseudoCAP" id="PA5366"/>
<dbReference type="HOGENOM" id="CLU_000604_1_22_6"/>
<dbReference type="InParanoid" id="Q51546"/>
<dbReference type="OrthoDB" id="9802264at2"/>
<dbReference type="PhylomeDB" id="Q51546"/>
<dbReference type="BioCyc" id="PAER208964:G1FZ6-5488-MONOMER"/>
<dbReference type="Proteomes" id="UP000002438">
    <property type="component" value="Chromosome"/>
</dbReference>
<dbReference type="GO" id="GO:0005886">
    <property type="term" value="C:plasma membrane"/>
    <property type="evidence" value="ECO:0007669"/>
    <property type="project" value="UniProtKB-SubCell"/>
</dbReference>
<dbReference type="GO" id="GO:0005524">
    <property type="term" value="F:ATP binding"/>
    <property type="evidence" value="ECO:0007669"/>
    <property type="project" value="UniProtKB-KW"/>
</dbReference>
<dbReference type="GO" id="GO:0016887">
    <property type="term" value="F:ATP hydrolysis activity"/>
    <property type="evidence" value="ECO:0007669"/>
    <property type="project" value="InterPro"/>
</dbReference>
<dbReference type="GO" id="GO:0015415">
    <property type="term" value="F:ATPase-coupled phosphate ion transmembrane transporter activity"/>
    <property type="evidence" value="ECO:0007669"/>
    <property type="project" value="UniProtKB-EC"/>
</dbReference>
<dbReference type="GO" id="GO:0035435">
    <property type="term" value="P:phosphate ion transmembrane transport"/>
    <property type="evidence" value="ECO:0007669"/>
    <property type="project" value="InterPro"/>
</dbReference>
<dbReference type="CDD" id="cd03260">
    <property type="entry name" value="ABC_PstB_phosphate_transporter"/>
    <property type="match status" value="1"/>
</dbReference>
<dbReference type="FunFam" id="3.40.50.300:FF:000132">
    <property type="entry name" value="Phosphate import ATP-binding protein PstB"/>
    <property type="match status" value="1"/>
</dbReference>
<dbReference type="Gene3D" id="3.40.50.300">
    <property type="entry name" value="P-loop containing nucleotide triphosphate hydrolases"/>
    <property type="match status" value="1"/>
</dbReference>
<dbReference type="InterPro" id="IPR003593">
    <property type="entry name" value="AAA+_ATPase"/>
</dbReference>
<dbReference type="InterPro" id="IPR003439">
    <property type="entry name" value="ABC_transporter-like_ATP-bd"/>
</dbReference>
<dbReference type="InterPro" id="IPR017871">
    <property type="entry name" value="ABC_transporter-like_CS"/>
</dbReference>
<dbReference type="InterPro" id="IPR027417">
    <property type="entry name" value="P-loop_NTPase"/>
</dbReference>
<dbReference type="InterPro" id="IPR005670">
    <property type="entry name" value="PstB-like"/>
</dbReference>
<dbReference type="NCBIfam" id="TIGR00972">
    <property type="entry name" value="3a0107s01c2"/>
    <property type="match status" value="1"/>
</dbReference>
<dbReference type="PANTHER" id="PTHR43423">
    <property type="entry name" value="ABC TRANSPORTER I FAMILY MEMBER 17"/>
    <property type="match status" value="1"/>
</dbReference>
<dbReference type="PANTHER" id="PTHR43423:SF12">
    <property type="entry name" value="IRON EXPORT ATP-BINDING PROTEIN FETA-RELATED"/>
    <property type="match status" value="1"/>
</dbReference>
<dbReference type="Pfam" id="PF00005">
    <property type="entry name" value="ABC_tran"/>
    <property type="match status" value="1"/>
</dbReference>
<dbReference type="SMART" id="SM00382">
    <property type="entry name" value="AAA"/>
    <property type="match status" value="1"/>
</dbReference>
<dbReference type="SUPFAM" id="SSF52540">
    <property type="entry name" value="P-loop containing nucleoside triphosphate hydrolases"/>
    <property type="match status" value="1"/>
</dbReference>
<dbReference type="PROSITE" id="PS00211">
    <property type="entry name" value="ABC_TRANSPORTER_1"/>
    <property type="match status" value="1"/>
</dbReference>
<dbReference type="PROSITE" id="PS50893">
    <property type="entry name" value="ABC_TRANSPORTER_2"/>
    <property type="match status" value="1"/>
</dbReference>
<dbReference type="PROSITE" id="PS51238">
    <property type="entry name" value="PSTB"/>
    <property type="match status" value="1"/>
</dbReference>
<keyword id="KW-0067">ATP-binding</keyword>
<keyword id="KW-0997">Cell inner membrane</keyword>
<keyword id="KW-1003">Cell membrane</keyword>
<keyword id="KW-0472">Membrane</keyword>
<keyword id="KW-0547">Nucleotide-binding</keyword>
<keyword id="KW-0592">Phosphate transport</keyword>
<keyword id="KW-1185">Reference proteome</keyword>
<keyword id="KW-1278">Translocase</keyword>
<keyword id="KW-0813">Transport</keyword>
<evidence type="ECO:0000255" key="1">
    <source>
        <dbReference type="HAMAP-Rule" id="MF_01702"/>
    </source>
</evidence>
<evidence type="ECO:0000305" key="2"/>
<sequence length="277" mass="31045">MQNETASHGINFDALGRDRQSLDLASESVELEVPGLNLFYGAKQALFDVRMNIPKQRVTAFIGPSGCGKSTLLRCFNRMNDLVDGCRVEGEIRLDGHNIFAKGVDVAELRRRVGMVFQKPNPFPKSIYENVVYGLRIQGINKKRVLDEAVEWALKGAALWEEVKDRLHESALGLSGGQQQRLVIARTIAVEPEVLLLDEPCSALDPISTLKIEELIYELKSKFTIVIVTHNMQQAARVSDYTAFMYMGKLIEFGDTDTLFTNPAKKQTEDYITGRYG</sequence>
<reference key="1">
    <citation type="journal article" date="1996" name="Mol. Gen. Genet.">
        <title>Molecular analysis of the phosphate-specific transport (pst) operon of Pseudomonas aeruginosa.</title>
        <authorList>
            <person name="Nikata T."/>
            <person name="Sakai Y."/>
            <person name="Shibata K."/>
            <person name="Kato J."/>
            <person name="Kuroda A."/>
            <person name="Ohtake H."/>
        </authorList>
    </citation>
    <scope>NUCLEOTIDE SEQUENCE [GENOMIC DNA]</scope>
    <source>
        <strain>ATCC 15692 / DSM 22644 / CIP 104116 / JCM 14847 / LMG 12228 / 1C / PRS 101 / PAO1</strain>
    </source>
</reference>
<reference key="2">
    <citation type="journal article" date="1994" name="J. Bacteriol.">
        <title>Cloning and characterization of a Pseudomonas aeruginosa gene involved in the negative regulation of phosphate taxis.</title>
        <authorList>
            <person name="Kato J."/>
            <person name="Sakai Y."/>
            <person name="Nikata T."/>
            <person name="Ohtake H."/>
        </authorList>
    </citation>
    <scope>NUCLEOTIDE SEQUENCE [GENOMIC DNA]</scope>
    <source>
        <strain>ATCC 15692 / DSM 22644 / CIP 104116 / JCM 14847 / LMG 12228 / 1C / PRS 101 / PAO1</strain>
    </source>
</reference>
<reference key="3">
    <citation type="journal article" date="2000" name="Nature">
        <title>Complete genome sequence of Pseudomonas aeruginosa PAO1, an opportunistic pathogen.</title>
        <authorList>
            <person name="Stover C.K."/>
            <person name="Pham X.-Q.T."/>
            <person name="Erwin A.L."/>
            <person name="Mizoguchi S.D."/>
            <person name="Warrener P."/>
            <person name="Hickey M.J."/>
            <person name="Brinkman F.S.L."/>
            <person name="Hufnagle W.O."/>
            <person name="Kowalik D.J."/>
            <person name="Lagrou M."/>
            <person name="Garber R.L."/>
            <person name="Goltry L."/>
            <person name="Tolentino E."/>
            <person name="Westbrock-Wadman S."/>
            <person name="Yuan Y."/>
            <person name="Brody L.L."/>
            <person name="Coulter S.N."/>
            <person name="Folger K.R."/>
            <person name="Kas A."/>
            <person name="Larbig K."/>
            <person name="Lim R.M."/>
            <person name="Smith K.A."/>
            <person name="Spencer D.H."/>
            <person name="Wong G.K.-S."/>
            <person name="Wu Z."/>
            <person name="Paulsen I.T."/>
            <person name="Reizer J."/>
            <person name="Saier M.H. Jr."/>
            <person name="Hancock R.E.W."/>
            <person name="Lory S."/>
            <person name="Olson M.V."/>
        </authorList>
    </citation>
    <scope>NUCLEOTIDE SEQUENCE [LARGE SCALE GENOMIC DNA]</scope>
    <source>
        <strain>ATCC 15692 / DSM 22644 / CIP 104116 / JCM 14847 / LMG 12228 / 1C / PRS 101 / PAO1</strain>
    </source>
</reference>
<accession>Q51546</accession>
<organism>
    <name type="scientific">Pseudomonas aeruginosa (strain ATCC 15692 / DSM 22644 / CIP 104116 / JCM 14847 / LMG 12228 / 1C / PRS 101 / PAO1)</name>
    <dbReference type="NCBI Taxonomy" id="208964"/>
    <lineage>
        <taxon>Bacteria</taxon>
        <taxon>Pseudomonadati</taxon>
        <taxon>Pseudomonadota</taxon>
        <taxon>Gammaproteobacteria</taxon>
        <taxon>Pseudomonadales</taxon>
        <taxon>Pseudomonadaceae</taxon>
        <taxon>Pseudomonas</taxon>
    </lineage>
</organism>
<name>PSTB_PSEAE</name>
<comment type="function">
    <text evidence="1">Part of the ABC transporter complex PstSACB involved in phosphate import. Responsible for energy coupling to the transport system.</text>
</comment>
<comment type="catalytic activity">
    <reaction evidence="1">
        <text>phosphate(out) + ATP + H2O = ADP + 2 phosphate(in) + H(+)</text>
        <dbReference type="Rhea" id="RHEA:24440"/>
        <dbReference type="ChEBI" id="CHEBI:15377"/>
        <dbReference type="ChEBI" id="CHEBI:15378"/>
        <dbReference type="ChEBI" id="CHEBI:30616"/>
        <dbReference type="ChEBI" id="CHEBI:43474"/>
        <dbReference type="ChEBI" id="CHEBI:456216"/>
        <dbReference type="EC" id="7.3.2.1"/>
    </reaction>
</comment>
<comment type="subunit">
    <text evidence="2">The complex is composed of two ATP-binding proteins (PstB), two transmembrane proteins (PstC and PstA) (Potential). PstS is missing in this species.</text>
</comment>
<comment type="subcellular location">
    <subcellularLocation>
        <location>Cell inner membrane</location>
        <topology>Peripheral membrane protein</topology>
    </subcellularLocation>
</comment>
<comment type="similarity">
    <text evidence="1">Belongs to the ABC transporter superfamily. Phosphate importer (TC 3.A.1.7) family.</text>
</comment>
<protein>
    <recommendedName>
        <fullName evidence="1">Phosphate import ATP-binding protein PstB</fullName>
        <ecNumber evidence="1">7.3.2.1</ecNumber>
    </recommendedName>
    <alternativeName>
        <fullName evidence="1">ABC phosphate transporter</fullName>
    </alternativeName>
    <alternativeName>
        <fullName evidence="1">Phosphate-transporting ATPase</fullName>
    </alternativeName>
</protein>
<gene>
    <name evidence="1" type="primary">pstB</name>
    <name type="ordered locus">PA5366</name>
</gene>